<name>PLSX_SHEPC</name>
<gene>
    <name evidence="1" type="primary">plsX</name>
    <name type="ordered locus">Sputcn32_1579</name>
</gene>
<protein>
    <recommendedName>
        <fullName evidence="1">Phosphate acyltransferase</fullName>
        <ecNumber evidence="1">2.3.1.274</ecNumber>
    </recommendedName>
    <alternativeName>
        <fullName evidence="1">Acyl-ACP phosphotransacylase</fullName>
    </alternativeName>
    <alternativeName>
        <fullName evidence="1">Acyl-[acyl-carrier-protein]--phosphate acyltransferase</fullName>
    </alternativeName>
    <alternativeName>
        <fullName evidence="1">Phosphate-acyl-ACP acyltransferase</fullName>
    </alternativeName>
</protein>
<keyword id="KW-0963">Cytoplasm</keyword>
<keyword id="KW-0444">Lipid biosynthesis</keyword>
<keyword id="KW-0443">Lipid metabolism</keyword>
<keyword id="KW-0594">Phospholipid biosynthesis</keyword>
<keyword id="KW-1208">Phospholipid metabolism</keyword>
<keyword id="KW-0808">Transferase</keyword>
<accession>A4Y5S1</accession>
<reference key="1">
    <citation type="submission" date="2007-04" db="EMBL/GenBank/DDBJ databases">
        <title>Complete sequence of Shewanella putrefaciens CN-32.</title>
        <authorList>
            <consortium name="US DOE Joint Genome Institute"/>
            <person name="Copeland A."/>
            <person name="Lucas S."/>
            <person name="Lapidus A."/>
            <person name="Barry K."/>
            <person name="Detter J.C."/>
            <person name="Glavina del Rio T."/>
            <person name="Hammon N."/>
            <person name="Israni S."/>
            <person name="Dalin E."/>
            <person name="Tice H."/>
            <person name="Pitluck S."/>
            <person name="Chain P."/>
            <person name="Malfatti S."/>
            <person name="Shin M."/>
            <person name="Vergez L."/>
            <person name="Schmutz J."/>
            <person name="Larimer F."/>
            <person name="Land M."/>
            <person name="Hauser L."/>
            <person name="Kyrpides N."/>
            <person name="Mikhailova N."/>
            <person name="Romine M.F."/>
            <person name="Fredrickson J."/>
            <person name="Tiedje J."/>
            <person name="Richardson P."/>
        </authorList>
    </citation>
    <scope>NUCLEOTIDE SEQUENCE [LARGE SCALE GENOMIC DNA]</scope>
    <source>
        <strain>CN-32 / ATCC BAA-453</strain>
    </source>
</reference>
<organism>
    <name type="scientific">Shewanella putrefaciens (strain CN-32 / ATCC BAA-453)</name>
    <dbReference type="NCBI Taxonomy" id="319224"/>
    <lineage>
        <taxon>Bacteria</taxon>
        <taxon>Pseudomonadati</taxon>
        <taxon>Pseudomonadota</taxon>
        <taxon>Gammaproteobacteria</taxon>
        <taxon>Alteromonadales</taxon>
        <taxon>Shewanellaceae</taxon>
        <taxon>Shewanella</taxon>
    </lineage>
</organism>
<dbReference type="EC" id="2.3.1.274" evidence="1"/>
<dbReference type="EMBL" id="CP000681">
    <property type="protein sequence ID" value="ABP75304.1"/>
    <property type="molecule type" value="Genomic_DNA"/>
</dbReference>
<dbReference type="SMR" id="A4Y5S1"/>
<dbReference type="STRING" id="319224.Sputcn32_1579"/>
<dbReference type="KEGG" id="spc:Sputcn32_1579"/>
<dbReference type="eggNOG" id="COG0416">
    <property type="taxonomic scope" value="Bacteria"/>
</dbReference>
<dbReference type="HOGENOM" id="CLU_039379_1_0_6"/>
<dbReference type="UniPathway" id="UPA00085"/>
<dbReference type="GO" id="GO:0005737">
    <property type="term" value="C:cytoplasm"/>
    <property type="evidence" value="ECO:0007669"/>
    <property type="project" value="UniProtKB-SubCell"/>
</dbReference>
<dbReference type="GO" id="GO:0043811">
    <property type="term" value="F:phosphate:acyl-[acyl carrier protein] acyltransferase activity"/>
    <property type="evidence" value="ECO:0007669"/>
    <property type="project" value="UniProtKB-UniRule"/>
</dbReference>
<dbReference type="GO" id="GO:0006633">
    <property type="term" value="P:fatty acid biosynthetic process"/>
    <property type="evidence" value="ECO:0007669"/>
    <property type="project" value="UniProtKB-UniRule"/>
</dbReference>
<dbReference type="GO" id="GO:0008654">
    <property type="term" value="P:phospholipid biosynthetic process"/>
    <property type="evidence" value="ECO:0007669"/>
    <property type="project" value="UniProtKB-KW"/>
</dbReference>
<dbReference type="Gene3D" id="3.40.718.10">
    <property type="entry name" value="Isopropylmalate Dehydrogenase"/>
    <property type="match status" value="1"/>
</dbReference>
<dbReference type="HAMAP" id="MF_00019">
    <property type="entry name" value="PlsX"/>
    <property type="match status" value="1"/>
</dbReference>
<dbReference type="InterPro" id="IPR003664">
    <property type="entry name" value="FA_synthesis"/>
</dbReference>
<dbReference type="InterPro" id="IPR012281">
    <property type="entry name" value="Phospholipid_synth_PlsX-like"/>
</dbReference>
<dbReference type="NCBIfam" id="TIGR00182">
    <property type="entry name" value="plsX"/>
    <property type="match status" value="1"/>
</dbReference>
<dbReference type="PANTHER" id="PTHR30100">
    <property type="entry name" value="FATTY ACID/PHOSPHOLIPID SYNTHESIS PROTEIN PLSX"/>
    <property type="match status" value="1"/>
</dbReference>
<dbReference type="PANTHER" id="PTHR30100:SF1">
    <property type="entry name" value="PHOSPHATE ACYLTRANSFERASE"/>
    <property type="match status" value="1"/>
</dbReference>
<dbReference type="Pfam" id="PF02504">
    <property type="entry name" value="FA_synthesis"/>
    <property type="match status" value="1"/>
</dbReference>
<dbReference type="PIRSF" id="PIRSF002465">
    <property type="entry name" value="Phsphlp_syn_PlsX"/>
    <property type="match status" value="1"/>
</dbReference>
<dbReference type="SUPFAM" id="SSF53659">
    <property type="entry name" value="Isocitrate/Isopropylmalate dehydrogenase-like"/>
    <property type="match status" value="1"/>
</dbReference>
<sequence length="342" mass="37087">MTSLTLALDAMGGDHGPHVTVPAALRALQLHSFLQIILVGDKTEIDVYLRQADPQLLSRIEVIHTDEVVSMSDRPVHALRTRKNSSMRLAIELVRDARASACVSAGNTGALMAMAKVLLKTLPGIDRPALVSCLPAVTQKPVYLLDLGANVSCDSETLFQFAVMGSVLCEAVDKKSRPKVALLNVGVEEIKGNDQVQQAAQLLQHTEQINYTGFIEGDEIYSGNVDVIVCDGFVGNITLKTSEGIAKLLVHQLKRGLTQGLFVRFLAKLIAPRIQAVLSQMNPDHYNGASLLGLRGIVVKSHGNADETAYLQAISLAVTEAQRRLPEMIKDRLESILLDINN</sequence>
<evidence type="ECO:0000255" key="1">
    <source>
        <dbReference type="HAMAP-Rule" id="MF_00019"/>
    </source>
</evidence>
<proteinExistence type="inferred from homology"/>
<comment type="function">
    <text evidence="1">Catalyzes the reversible formation of acyl-phosphate (acyl-PO(4)) from acyl-[acyl-carrier-protein] (acyl-ACP). This enzyme utilizes acyl-ACP as fatty acyl donor, but not acyl-CoA.</text>
</comment>
<comment type="catalytic activity">
    <reaction evidence="1">
        <text>a fatty acyl-[ACP] + phosphate = an acyl phosphate + holo-[ACP]</text>
        <dbReference type="Rhea" id="RHEA:42292"/>
        <dbReference type="Rhea" id="RHEA-COMP:9685"/>
        <dbReference type="Rhea" id="RHEA-COMP:14125"/>
        <dbReference type="ChEBI" id="CHEBI:43474"/>
        <dbReference type="ChEBI" id="CHEBI:59918"/>
        <dbReference type="ChEBI" id="CHEBI:64479"/>
        <dbReference type="ChEBI" id="CHEBI:138651"/>
        <dbReference type="EC" id="2.3.1.274"/>
    </reaction>
</comment>
<comment type="pathway">
    <text evidence="1">Lipid metabolism; phospholipid metabolism.</text>
</comment>
<comment type="subunit">
    <text evidence="1">Homodimer. Probably interacts with PlsY.</text>
</comment>
<comment type="subcellular location">
    <subcellularLocation>
        <location evidence="1">Cytoplasm</location>
    </subcellularLocation>
    <text evidence="1">Associated with the membrane possibly through PlsY.</text>
</comment>
<comment type="similarity">
    <text evidence="1">Belongs to the PlsX family.</text>
</comment>
<feature type="chain" id="PRO_1000001828" description="Phosphate acyltransferase">
    <location>
        <begin position="1"/>
        <end position="342"/>
    </location>
</feature>